<evidence type="ECO:0000250" key="1">
    <source>
        <dbReference type="UniProtKB" id="P03433"/>
    </source>
</evidence>
<evidence type="ECO:0000255" key="2">
    <source>
        <dbReference type="HAMAP-Rule" id="MF_04063"/>
    </source>
</evidence>
<evidence type="ECO:0007829" key="3">
    <source>
        <dbReference type="PDB" id="7NHA"/>
    </source>
</evidence>
<evidence type="ECO:0007829" key="4">
    <source>
        <dbReference type="PDB" id="7NHC"/>
    </source>
</evidence>
<evidence type="ECO:0007829" key="5">
    <source>
        <dbReference type="PDB" id="7NHX"/>
    </source>
</evidence>
<evidence type="ECO:0007829" key="6">
    <source>
        <dbReference type="PDB" id="8R60"/>
    </source>
</evidence>
<protein>
    <recommendedName>
        <fullName evidence="2">Polymerase acidic protein</fullName>
        <ecNumber evidence="2">3.1.-.-</ecNumber>
    </recommendedName>
    <alternativeName>
        <fullName evidence="2">RNA-directed RNA polymerase subunit P2</fullName>
    </alternativeName>
</protein>
<name>PA_I18A0</name>
<gene>
    <name evidence="2" type="primary">PA</name>
</gene>
<organism>
    <name type="scientific">Influenza A virus (strain A/Brevig Mission/1/1918 H1N1)</name>
    <name type="common">Influenza A virus (strain A/South Carolina/1/1918 H1N1)</name>
    <dbReference type="NCBI Taxonomy" id="88776"/>
    <lineage>
        <taxon>Viruses</taxon>
        <taxon>Riboviria</taxon>
        <taxon>Orthornavirae</taxon>
        <taxon>Negarnaviricota</taxon>
        <taxon>Polyploviricotina</taxon>
        <taxon>Insthoviricetes</taxon>
        <taxon>Articulavirales</taxon>
        <taxon>Orthomyxoviridae</taxon>
        <taxon>Alphainfluenzavirus</taxon>
        <taxon>Alphainfluenzavirus influenzae</taxon>
        <taxon>Influenza A virus</taxon>
    </lineage>
</organism>
<feature type="chain" id="PRO_0000310571" description="Polymerase acidic protein">
    <location>
        <begin position="1"/>
        <end position="716"/>
    </location>
</feature>
<feature type="short sequence motif" description="Nuclear localization signal 1 (NLS1)" evidence="1 2">
    <location>
        <begin position="124"/>
        <end position="139"/>
    </location>
</feature>
<feature type="short sequence motif" description="Nuclear localization signal 2 (NLS2)" evidence="1 2">
    <location>
        <begin position="184"/>
        <end position="247"/>
    </location>
</feature>
<feature type="binding site" evidence="2">
    <location>
        <position position="41"/>
    </location>
    <ligand>
        <name>Mn(2+)</name>
        <dbReference type="ChEBI" id="CHEBI:29035"/>
        <label>1</label>
    </ligand>
</feature>
<feature type="binding site" evidence="2">
    <location>
        <position position="80"/>
    </location>
    <ligand>
        <name>Mn(2+)</name>
        <dbReference type="ChEBI" id="CHEBI:29035"/>
        <label>2</label>
    </ligand>
</feature>
<feature type="binding site" evidence="2">
    <location>
        <position position="108"/>
    </location>
    <ligand>
        <name>Mn(2+)</name>
        <dbReference type="ChEBI" id="CHEBI:29035"/>
        <label>1</label>
    </ligand>
</feature>
<feature type="binding site" evidence="2">
    <location>
        <position position="108"/>
    </location>
    <ligand>
        <name>Mn(2+)</name>
        <dbReference type="ChEBI" id="CHEBI:29035"/>
        <label>2</label>
    </ligand>
</feature>
<feature type="binding site" evidence="2">
    <location>
        <position position="119"/>
    </location>
    <ligand>
        <name>Mn(2+)</name>
        <dbReference type="ChEBI" id="CHEBI:29035"/>
        <label>1</label>
    </ligand>
</feature>
<feature type="binding site" evidence="2">
    <location>
        <position position="120"/>
    </location>
    <ligand>
        <name>Mn(2+)</name>
        <dbReference type="ChEBI" id="CHEBI:29035"/>
        <label>1</label>
    </ligand>
</feature>
<feature type="helix" evidence="4">
    <location>
        <begin position="2"/>
        <end position="8"/>
    </location>
</feature>
<feature type="helix" evidence="4">
    <location>
        <begin position="11"/>
        <end position="24"/>
    </location>
</feature>
<feature type="turn" evidence="4">
    <location>
        <begin position="28"/>
        <end position="30"/>
    </location>
</feature>
<feature type="helix" evidence="4">
    <location>
        <begin position="32"/>
        <end position="49"/>
    </location>
</feature>
<feature type="strand" evidence="4">
    <location>
        <begin position="56"/>
        <end position="58"/>
    </location>
</feature>
<feature type="strand" evidence="6">
    <location>
        <begin position="64"/>
        <end position="66"/>
    </location>
</feature>
<feature type="strand" evidence="3">
    <location>
        <begin position="68"/>
        <end position="70"/>
    </location>
</feature>
<feature type="strand" evidence="4">
    <location>
        <begin position="75"/>
        <end position="78"/>
    </location>
</feature>
<feature type="strand" evidence="3">
    <location>
        <begin position="80"/>
        <end position="82"/>
    </location>
</feature>
<feature type="helix" evidence="4">
    <location>
        <begin position="84"/>
        <end position="98"/>
    </location>
</feature>
<feature type="strand" evidence="4">
    <location>
        <begin position="108"/>
        <end position="111"/>
    </location>
</feature>
<feature type="turn" evidence="4">
    <location>
        <begin position="112"/>
        <end position="115"/>
    </location>
</feature>
<feature type="strand" evidence="4">
    <location>
        <begin position="116"/>
        <end position="125"/>
    </location>
</feature>
<feature type="helix" evidence="4">
    <location>
        <begin position="127"/>
        <end position="137"/>
    </location>
</feature>
<feature type="strand" evidence="3">
    <location>
        <begin position="138"/>
        <end position="140"/>
    </location>
</feature>
<feature type="strand" evidence="4">
    <location>
        <begin position="143"/>
        <end position="151"/>
    </location>
</feature>
<feature type="strand" evidence="4">
    <location>
        <begin position="154"/>
        <end position="156"/>
    </location>
</feature>
<feature type="helix" evidence="4">
    <location>
        <begin position="157"/>
        <end position="159"/>
    </location>
</feature>
<feature type="helix" evidence="4">
    <location>
        <begin position="165"/>
        <end position="185"/>
    </location>
</feature>
<feature type="helix" evidence="4">
    <location>
        <begin position="188"/>
        <end position="199"/>
    </location>
</feature>
<feature type="helix" evidence="4">
    <location>
        <begin position="210"/>
        <end position="215"/>
    </location>
</feature>
<feature type="helix" evidence="4">
    <location>
        <begin position="226"/>
        <end position="234"/>
    </location>
</feature>
<feature type="helix" evidence="4">
    <location>
        <begin position="241"/>
        <end position="248"/>
    </location>
</feature>
<feature type="strand" evidence="4">
    <location>
        <begin position="273"/>
        <end position="275"/>
    </location>
</feature>
<feature type="strand" evidence="4">
    <location>
        <begin position="280"/>
        <end position="282"/>
    </location>
</feature>
<feature type="strand" evidence="4">
    <location>
        <begin position="284"/>
        <end position="286"/>
    </location>
</feature>
<feature type="strand" evidence="4">
    <location>
        <begin position="298"/>
        <end position="301"/>
    </location>
</feature>
<feature type="helix" evidence="4">
    <location>
        <begin position="303"/>
        <end position="312"/>
    </location>
</feature>
<feature type="strand" evidence="4">
    <location>
        <begin position="317"/>
        <end position="324"/>
    </location>
</feature>
<feature type="strand" evidence="4">
    <location>
        <begin position="327"/>
        <end position="329"/>
    </location>
</feature>
<feature type="helix" evidence="4">
    <location>
        <begin position="331"/>
        <end position="350"/>
    </location>
</feature>
<feature type="strand" evidence="4">
    <location>
        <begin position="351"/>
        <end position="353"/>
    </location>
</feature>
<feature type="strand" evidence="4">
    <location>
        <begin position="356"/>
        <end position="360"/>
    </location>
</feature>
<feature type="helix" evidence="4">
    <location>
        <begin position="364"/>
        <end position="369"/>
    </location>
</feature>
<feature type="strand" evidence="4">
    <location>
        <begin position="377"/>
        <end position="380"/>
    </location>
</feature>
<feature type="turn" evidence="4">
    <location>
        <begin position="381"/>
        <end position="383"/>
    </location>
</feature>
<feature type="strand" evidence="4">
    <location>
        <begin position="384"/>
        <end position="386"/>
    </location>
</feature>
<feature type="strand" evidence="5">
    <location>
        <begin position="390"/>
        <end position="392"/>
    </location>
</feature>
<feature type="helix" evidence="4">
    <location>
        <begin position="405"/>
        <end position="414"/>
    </location>
</feature>
<feature type="strand" evidence="4">
    <location>
        <begin position="419"/>
        <end position="421"/>
    </location>
</feature>
<feature type="helix" evidence="4">
    <location>
        <begin position="434"/>
        <end position="451"/>
    </location>
</feature>
<feature type="helix" evidence="4">
    <location>
        <begin position="454"/>
        <end position="475"/>
    </location>
</feature>
<feature type="strand" evidence="4">
    <location>
        <begin position="477"/>
        <end position="491"/>
    </location>
</feature>
<feature type="strand" evidence="4">
    <location>
        <begin position="496"/>
        <end position="506"/>
    </location>
</feature>
<feature type="strand" evidence="4">
    <location>
        <begin position="517"/>
        <end position="526"/>
    </location>
</feature>
<feature type="helix" evidence="4">
    <location>
        <begin position="534"/>
        <end position="537"/>
    </location>
</feature>
<feature type="strand" evidence="4">
    <location>
        <begin position="540"/>
        <end position="548"/>
    </location>
</feature>
<feature type="strand" evidence="4">
    <location>
        <begin position="553"/>
        <end position="556"/>
    </location>
</feature>
<feature type="strand" evidence="4">
    <location>
        <begin position="559"/>
        <end position="571"/>
    </location>
</feature>
<feature type="helix" evidence="4">
    <location>
        <begin position="572"/>
        <end position="578"/>
    </location>
</feature>
<feature type="helix" evidence="4">
    <location>
        <begin position="579"/>
        <end position="582"/>
    </location>
</feature>
<feature type="helix" evidence="4">
    <location>
        <begin position="583"/>
        <end position="602"/>
    </location>
</feature>
<feature type="helix" evidence="4">
    <location>
        <begin position="608"/>
        <end position="613"/>
    </location>
</feature>
<feature type="strand" evidence="4">
    <location>
        <begin position="619"/>
        <end position="624"/>
    </location>
</feature>
<feature type="strand" evidence="4">
    <location>
        <begin position="627"/>
        <end position="631"/>
    </location>
</feature>
<feature type="helix" evidence="4">
    <location>
        <begin position="633"/>
        <end position="649"/>
    </location>
</feature>
<feature type="helix" evidence="4">
    <location>
        <begin position="653"/>
        <end position="673"/>
    </location>
</feature>
<feature type="strand" evidence="4">
    <location>
        <begin position="679"/>
        <end position="681"/>
    </location>
</feature>
<feature type="helix" evidence="4">
    <location>
        <begin position="683"/>
        <end position="691"/>
    </location>
</feature>
<feature type="helix" evidence="4">
    <location>
        <begin position="698"/>
        <end position="713"/>
    </location>
</feature>
<organismHost>
    <name type="scientific">Aves</name>
    <dbReference type="NCBI Taxonomy" id="8782"/>
</organismHost>
<organismHost>
    <name type="scientific">Homo sapiens</name>
    <name type="common">Human</name>
    <dbReference type="NCBI Taxonomy" id="9606"/>
</organismHost>
<organismHost>
    <name type="scientific">Sus scrofa</name>
    <name type="common">Pig</name>
    <dbReference type="NCBI Taxonomy" id="9823"/>
</organismHost>
<keyword id="KW-0002">3D-structure</keyword>
<keyword id="KW-1157">Cap snatching</keyword>
<keyword id="KW-0255">Endonuclease</keyword>
<keyword id="KW-1262">Eukaryotic host gene expression shutoff by virus</keyword>
<keyword id="KW-1191">Eukaryotic host transcription shutoff by virus</keyword>
<keyword id="KW-1035">Host cytoplasm</keyword>
<keyword id="KW-1190">Host gene expression shutoff by virus</keyword>
<keyword id="KW-1048">Host nucleus</keyword>
<keyword id="KW-0945">Host-virus interaction</keyword>
<keyword id="KW-0378">Hydrolase</keyword>
<keyword id="KW-1104">Inhibition of host RNA polymerase II by virus</keyword>
<keyword id="KW-0464">Manganese</keyword>
<keyword id="KW-0479">Metal-binding</keyword>
<keyword id="KW-0540">Nuclease</keyword>
<keyword id="KW-0597">Phosphoprotein</keyword>
<keyword id="KW-0688">Ribosomal frameshifting</keyword>
<reference key="1">
    <citation type="journal article" date="2005" name="Nature">
        <title>Characterization of the 1918 influenza virus polymerase genes.</title>
        <authorList>
            <person name="Taubenberger J.K."/>
            <person name="Reid A.H."/>
            <person name="Lourens R.M."/>
            <person name="Wang R."/>
            <person name="Jin G."/>
            <person name="Fanning T.G."/>
        </authorList>
    </citation>
    <scope>NUCLEOTIDE SEQUENCE [MRNA]</scope>
</reference>
<reference key="2">
    <citation type="submission" date="2023-06" db="EMBL/GenBank/DDBJ databases">
        <authorList>
            <person name="Taubenberger J.K."/>
            <person name="Reid A.H."/>
            <person name="Lourens R.M."/>
            <person name="Wang R."/>
            <person name="Jin G."/>
            <person name="Fanning T.G."/>
        </authorList>
    </citation>
    <scope>SEQUENCE REVISION TO ARG-158</scope>
</reference>
<reference key="3">
    <citation type="journal article" date="2012" name="Science">
        <title>An overlapping protein-coding region in influenza A virus segment 3 modulates the host response.</title>
        <authorList>
            <person name="Jagger B.W."/>
            <person name="Wise H.M."/>
            <person name="Kash J.C."/>
            <person name="Walters K.A."/>
            <person name="Wills N.M."/>
            <person name="Xiao Y.L."/>
            <person name="Dunfee R.L."/>
            <person name="Schwartzman L.M."/>
            <person name="Ozinsky A."/>
            <person name="Bell G.L."/>
            <person name="Dalton R.M."/>
            <person name="Lo A."/>
            <person name="Efstathiou S."/>
            <person name="Atkins J.F."/>
            <person name="Firth A.E."/>
            <person name="Taubenberger J.K."/>
            <person name="Digard P."/>
        </authorList>
    </citation>
    <scope>ALTERNATIVE SPLICING (ISOFORM PA-X)</scope>
</reference>
<sequence>MEDFVRQCFNPMIVELAEKAMKEYGEDLKIETNKFAAICTHLEVCFMYSDFHFINERGESIIVESGDPNALLKHRFEIIEGRDRTMAWTVVNSICNTTGAEKPKFLPDLYDYKENRFIEIGVTRREVHIYYLEKANKIKSEKTHIHIFSFTGEEMATRADYTLDEESRARIKTRLFTIRQEMASRGLWDSFRQSERGEETIEERFEITGTMRRLADQSLPPNFSSLENFRAYVDGFEPNGYIEGKLSQMSKEVNARIEPFLKTTPRPLRLPDGPPCSQRSKFLLMDALKLSIEDPSHEGEGIPLYDAIKCMRTFFGWKEPNVVKPHEKGINPNYLLAWKQVLAELQDIENEEKIPKTKNMKKTSQLKWALGENMAPEKVDFDDCKDVSDLKQYDSDEPELRSLASWIQSEFNKACELTDSSWIELDEIGEDVAPIEHIASMRRNYFTAEVSHCRATEYIMKGVYINTALLNASCAAMDDFQLIPMISKCRTKEGRRKTNLYGFIIKGRSHLRNDTDVVNFVSMEFSLTDPRLEPHKWEKYCVLEIGDMLLRSAIGQVSRPMFLYVRTNGTSKIKMKWGMEMRRCLLQSLQQIESMIEAESSVKEKDMTKEFFENKSETWPIGESPKGVEEGSIGKVCRTLLAKSVFNSLYASPQLEGFSAESRKLLLIVQALRDNLEPGTFDLGGLYEAIEECLINDPWVLLNASWFNSFLTHALR</sequence>
<proteinExistence type="evidence at protein level"/>
<dbReference type="EC" id="3.1.-.-" evidence="2"/>
<dbReference type="EMBL" id="DQ208311">
    <property type="protein sequence ID" value="ABA55040.2"/>
    <property type="molecule type" value="mRNA"/>
</dbReference>
<dbReference type="PDB" id="7NHA">
    <property type="method" value="EM"/>
    <property type="resolution" value="2.91 A"/>
    <property type="chains" value="A=1-716"/>
</dbReference>
<dbReference type="PDB" id="7NHC">
    <property type="method" value="EM"/>
    <property type="resolution" value="2.87 A"/>
    <property type="chains" value="A=1-716"/>
</dbReference>
<dbReference type="PDB" id="7NHX">
    <property type="method" value="EM"/>
    <property type="resolution" value="3.23 A"/>
    <property type="chains" value="A=1-716"/>
</dbReference>
<dbReference type="PDB" id="7NI0">
    <property type="method" value="EM"/>
    <property type="resolution" value="3.32 A"/>
    <property type="chains" value="A=1-716"/>
</dbReference>
<dbReference type="PDB" id="7NIK">
    <property type="method" value="EM"/>
    <property type="resolution" value="6.20 A"/>
    <property type="chains" value="A=1-716"/>
</dbReference>
<dbReference type="PDB" id="7NIL">
    <property type="method" value="EM"/>
    <property type="resolution" value="5.01 A"/>
    <property type="chains" value="A=1-716"/>
</dbReference>
<dbReference type="PDB" id="7NIR">
    <property type="method" value="EM"/>
    <property type="resolution" value="6.70 A"/>
    <property type="chains" value="A=1-716"/>
</dbReference>
<dbReference type="PDB" id="7NIS">
    <property type="method" value="EM"/>
    <property type="resolution" value="5.96 A"/>
    <property type="chains" value="A=1-716"/>
</dbReference>
<dbReference type="PDB" id="7NJ3">
    <property type="method" value="EM"/>
    <property type="resolution" value="4.48 A"/>
    <property type="chains" value="A=1-716"/>
</dbReference>
<dbReference type="PDB" id="7NJ4">
    <property type="method" value="EM"/>
    <property type="resolution" value="5.84 A"/>
    <property type="chains" value="A=1-716"/>
</dbReference>
<dbReference type="PDB" id="7NJ5">
    <property type="method" value="EM"/>
    <property type="resolution" value="4.63 A"/>
    <property type="chains" value="A=1-716"/>
</dbReference>
<dbReference type="PDB" id="7NJ7">
    <property type="method" value="EM"/>
    <property type="resolution" value="4.82 A"/>
    <property type="chains" value="A=1-716"/>
</dbReference>
<dbReference type="PDB" id="7NK1">
    <property type="method" value="EM"/>
    <property type="resolution" value="4.22 A"/>
    <property type="chains" value="A=1-716"/>
</dbReference>
<dbReference type="PDB" id="7NK2">
    <property type="method" value="EM"/>
    <property type="resolution" value="4.84 A"/>
    <property type="chains" value="A=1-716"/>
</dbReference>
<dbReference type="PDB" id="7NK4">
    <property type="method" value="EM"/>
    <property type="resolution" value="5.32 A"/>
    <property type="chains" value="A=1-716"/>
</dbReference>
<dbReference type="PDB" id="7NK6">
    <property type="method" value="EM"/>
    <property type="resolution" value="6.72 A"/>
    <property type="chains" value="A=1-716"/>
</dbReference>
<dbReference type="PDB" id="7NK8">
    <property type="method" value="EM"/>
    <property type="resolution" value="5.34 A"/>
    <property type="chains" value="A=1-716"/>
</dbReference>
<dbReference type="PDB" id="7NKA">
    <property type="method" value="EM"/>
    <property type="resolution" value="4.07 A"/>
    <property type="chains" value="A=1-716"/>
</dbReference>
<dbReference type="PDB" id="7NKC">
    <property type="method" value="EM"/>
    <property type="resolution" value="4.46 A"/>
    <property type="chains" value="A=1-716"/>
</dbReference>
<dbReference type="PDB" id="7NKI">
    <property type="method" value="EM"/>
    <property type="resolution" value="4.67 A"/>
    <property type="chains" value="A=1-716"/>
</dbReference>
<dbReference type="PDB" id="7NKR">
    <property type="method" value="EM"/>
    <property type="resolution" value="5.60 A"/>
    <property type="chains" value="A=1-716"/>
</dbReference>
<dbReference type="PDB" id="8R60">
    <property type="method" value="EM"/>
    <property type="resolution" value="3.23 A"/>
    <property type="chains" value="A=1-716"/>
</dbReference>
<dbReference type="PDB" id="8R65">
    <property type="method" value="EM"/>
    <property type="resolution" value="4.23 A"/>
    <property type="chains" value="A=1-716"/>
</dbReference>
<dbReference type="PDBsum" id="7NHA"/>
<dbReference type="PDBsum" id="7NHC"/>
<dbReference type="PDBsum" id="7NHX"/>
<dbReference type="PDBsum" id="7NI0"/>
<dbReference type="PDBsum" id="7NIK"/>
<dbReference type="PDBsum" id="7NIL"/>
<dbReference type="PDBsum" id="7NIR"/>
<dbReference type="PDBsum" id="7NIS"/>
<dbReference type="PDBsum" id="7NJ3"/>
<dbReference type="PDBsum" id="7NJ4"/>
<dbReference type="PDBsum" id="7NJ5"/>
<dbReference type="PDBsum" id="7NJ7"/>
<dbReference type="PDBsum" id="7NK1"/>
<dbReference type="PDBsum" id="7NK2"/>
<dbReference type="PDBsum" id="7NK4"/>
<dbReference type="PDBsum" id="7NK6"/>
<dbReference type="PDBsum" id="7NK8"/>
<dbReference type="PDBsum" id="7NKA"/>
<dbReference type="PDBsum" id="7NKC"/>
<dbReference type="PDBsum" id="7NKI"/>
<dbReference type="PDBsum" id="7NKR"/>
<dbReference type="PDBsum" id="8R60"/>
<dbReference type="PDBsum" id="8R65"/>
<dbReference type="EMDB" id="EMD-12322"/>
<dbReference type="EMDB" id="EMD-12323"/>
<dbReference type="EMDB" id="EMD-12342"/>
<dbReference type="EMDB" id="EMD-12348"/>
<dbReference type="EMDB" id="EMD-12361"/>
<dbReference type="EMDB" id="EMD-12362"/>
<dbReference type="EMDB" id="EMD-12363"/>
<dbReference type="EMDB" id="EMD-12364"/>
<dbReference type="EMDB" id="EMD-12371"/>
<dbReference type="EMDB" id="EMD-12372"/>
<dbReference type="EMDB" id="EMD-12373"/>
<dbReference type="EMDB" id="EMD-12375"/>
<dbReference type="EMDB" id="EMD-12428"/>
<dbReference type="EMDB" id="EMD-12429"/>
<dbReference type="EMDB" id="EMD-12430"/>
<dbReference type="EMDB" id="EMD-12431"/>
<dbReference type="EMDB" id="EMD-12433"/>
<dbReference type="EMDB" id="EMD-12435"/>
<dbReference type="EMDB" id="EMD-12437"/>
<dbReference type="EMDB" id="EMD-12440"/>
<dbReference type="EMDB" id="EMD-12447"/>
<dbReference type="EMDB" id="EMD-18945"/>
<dbReference type="EMDB" id="EMD-18947"/>
<dbReference type="SMR" id="Q3HM39"/>
<dbReference type="MEROPS" id="S62.001"/>
<dbReference type="Proteomes" id="UP000008430">
    <property type="component" value="Genome"/>
</dbReference>
<dbReference type="GO" id="GO:0030430">
    <property type="term" value="C:host cell cytoplasm"/>
    <property type="evidence" value="ECO:0007669"/>
    <property type="project" value="UniProtKB-SubCell"/>
</dbReference>
<dbReference type="GO" id="GO:0042025">
    <property type="term" value="C:host cell nucleus"/>
    <property type="evidence" value="ECO:0007669"/>
    <property type="project" value="UniProtKB-SubCell"/>
</dbReference>
<dbReference type="GO" id="GO:0004519">
    <property type="term" value="F:endonuclease activity"/>
    <property type="evidence" value="ECO:0007669"/>
    <property type="project" value="UniProtKB-KW"/>
</dbReference>
<dbReference type="GO" id="GO:0046872">
    <property type="term" value="F:metal ion binding"/>
    <property type="evidence" value="ECO:0007669"/>
    <property type="project" value="UniProtKB-KW"/>
</dbReference>
<dbReference type="GO" id="GO:0003723">
    <property type="term" value="F:RNA binding"/>
    <property type="evidence" value="ECO:0007669"/>
    <property type="project" value="UniProtKB-UniRule"/>
</dbReference>
<dbReference type="GO" id="GO:0075526">
    <property type="term" value="P:cap snatching"/>
    <property type="evidence" value="ECO:0007669"/>
    <property type="project" value="UniProtKB-UniRule"/>
</dbReference>
<dbReference type="GO" id="GO:0006351">
    <property type="term" value="P:DNA-templated transcription"/>
    <property type="evidence" value="ECO:0007669"/>
    <property type="project" value="UniProtKB-UniRule"/>
</dbReference>
<dbReference type="GO" id="GO:0039657">
    <property type="term" value="P:symbiont-mediated suppression of host gene expression"/>
    <property type="evidence" value="ECO:0007669"/>
    <property type="project" value="UniProtKB-KW"/>
</dbReference>
<dbReference type="GO" id="GO:0039523">
    <property type="term" value="P:symbiont-mediated suppression of host mRNA transcription via inhibition of RNA polymerase II activity"/>
    <property type="evidence" value="ECO:0007669"/>
    <property type="project" value="UniProtKB-UniRule"/>
</dbReference>
<dbReference type="GO" id="GO:0039694">
    <property type="term" value="P:viral RNA genome replication"/>
    <property type="evidence" value="ECO:0007669"/>
    <property type="project" value="InterPro"/>
</dbReference>
<dbReference type="GO" id="GO:0075523">
    <property type="term" value="P:viral translational frameshifting"/>
    <property type="evidence" value="ECO:0007669"/>
    <property type="project" value="UniProtKB-KW"/>
</dbReference>
<dbReference type="FunFam" id="3.40.91.90:FF:000001">
    <property type="entry name" value="Polymerase acidic protein"/>
    <property type="match status" value="1"/>
</dbReference>
<dbReference type="Gene3D" id="3.40.91.90">
    <property type="entry name" value="Influenza RNA-dependent RNA polymerase subunit PA, endonuclease domain"/>
    <property type="match status" value="1"/>
</dbReference>
<dbReference type="HAMAP" id="MF_04063">
    <property type="entry name" value="INFV_PA"/>
    <property type="match status" value="1"/>
</dbReference>
<dbReference type="InterPro" id="IPR037534">
    <property type="entry name" value="INFV_PA"/>
</dbReference>
<dbReference type="InterPro" id="IPR001009">
    <property type="entry name" value="PA/PA-X"/>
</dbReference>
<dbReference type="InterPro" id="IPR038372">
    <property type="entry name" value="PA/PA-X_sf"/>
</dbReference>
<dbReference type="Pfam" id="PF00603">
    <property type="entry name" value="Flu_PA"/>
    <property type="match status" value="1"/>
</dbReference>
<accession>Q3HM39</accession>
<comment type="function">
    <text evidence="2">Plays an essential role in viral RNA transcription and replication by forming the heterotrimeric polymerase complex together with PB1 and PB2 subunits. The complex transcribes viral mRNAs by using a unique mechanism called cap-snatching. It consists in the hijacking and cleavage of host capped pre-mRNAs. These short capped RNAs are then used as primers for viral mRNAs. The PB2 subunit is responsible for the binding of the 5' cap of cellular pre-mRNAs which are subsequently cleaved after 10-13 nucleotides by the PA subunit that carries the endonuclease activity.</text>
</comment>
<comment type="cofactor">
    <cofactor evidence="2">
        <name>Mn(2+)</name>
        <dbReference type="ChEBI" id="CHEBI:29035"/>
    </cofactor>
    <text evidence="2">Binds 2 manganese ions per subunit.</text>
</comment>
<comment type="subunit">
    <text evidence="1 2">Influenza RNA polymerase is composed of three subunits: PB1, PB2 and PA. Interacts (via C-terminus) with PB1 (via N-terminus).</text>
</comment>
<comment type="subcellular location">
    <subcellularLocation>
        <location evidence="2">Host cytoplasm</location>
    </subcellularLocation>
    <subcellularLocation>
        <location evidence="2">Host nucleus</location>
    </subcellularLocation>
    <text evidence="1 2">PB1 and PA are transported in the host nucleus as a complex.</text>
</comment>
<comment type="alternative products">
    <event type="ribosomal frameshifting"/>
    <isoform>
        <id>Q3HM39-1</id>
        <name>PA</name>
        <sequence type="displayed"/>
    </isoform>
    <isoform>
        <id>P0CK68-1</id>
        <name>PA-X</name>
        <sequence type="external"/>
    </isoform>
</comment>
<comment type="PTM">
    <text evidence="1 2">Phosphorylated on serines and threonines by host kinases, including human casein kinase II.</text>
</comment>
<comment type="miscellaneous">
    <text>South Carolina isolate has been sequenced from formalid fixed-lung tissues of a 21-year-old male which died in 1918 at Ft. Jackson, SC. Brevig Mission isolate has been sequenced from lung tissues of an Inuit woman buried in the permafrost in a gravesite near Brevig Mission, Alaska. This sample was recovered by John Hultin, retired pathologist.</text>
</comment>
<comment type="similarity">
    <text evidence="2">Belongs to the influenza viruses PA family.</text>
</comment>